<gene>
    <name evidence="1" type="primary">ftsA</name>
    <name type="ordered locus">SPD_1480</name>
</gene>
<comment type="function">
    <text evidence="1 2">Cell division protein that is involved in the assembly of the Z ring. May serve as a membrane anchor for the Z ring (By similarity). Increased expression restores growth to a PBP2b (penA) deletion strain as well as mreCD and rodA deletions, but not gpsB or rodZ deletions. Does not restore wild-type cell morphology to the penA deletion (PubMed:28941257).</text>
</comment>
<comment type="subunit">
    <text evidence="1">Self-interacts. Interacts with FtsZ.</text>
</comment>
<comment type="subcellular location">
    <subcellularLocation>
        <location evidence="1">Cell membrane</location>
        <topology evidence="1">Peripheral membrane protein</topology>
        <orientation evidence="1">Cytoplasmic side</orientation>
    </subcellularLocation>
    <text evidence="1">Localizes to the Z ring in an FtsZ-dependent manner. Targeted to the membrane through a conserved C-terminal amphiphatic helix.</text>
</comment>
<comment type="induction">
    <text evidence="2">Protein level is negatively regulated by KhpA/KhpB partly at the post-transcriptional level via its 5'-UTR (at protein level).</text>
</comment>
<comment type="similarity">
    <text evidence="1">Belongs to the FtsA/MreB family.</text>
</comment>
<accession>A0A0H2ZPT5</accession>
<dbReference type="EMBL" id="CP000410">
    <property type="protein sequence ID" value="ABJ55292.1"/>
    <property type="molecule type" value="Genomic_DNA"/>
</dbReference>
<dbReference type="RefSeq" id="WP_000090397.1">
    <property type="nucleotide sequence ID" value="NZ_JAMLJR010000013.1"/>
</dbReference>
<dbReference type="SMR" id="A0A0H2ZPT5"/>
<dbReference type="PaxDb" id="373153-SPD_1480"/>
<dbReference type="KEGG" id="spd:SPD_1480"/>
<dbReference type="eggNOG" id="COG0849">
    <property type="taxonomic scope" value="Bacteria"/>
</dbReference>
<dbReference type="HOGENOM" id="CLU_037850_1_1_9"/>
<dbReference type="BioCyc" id="SPNE373153:G1G6V-1596-MONOMER"/>
<dbReference type="Proteomes" id="UP000001452">
    <property type="component" value="Chromosome"/>
</dbReference>
<dbReference type="GO" id="GO:0032153">
    <property type="term" value="C:cell division site"/>
    <property type="evidence" value="ECO:0007669"/>
    <property type="project" value="UniProtKB-UniRule"/>
</dbReference>
<dbReference type="GO" id="GO:0009898">
    <property type="term" value="C:cytoplasmic side of plasma membrane"/>
    <property type="evidence" value="ECO:0007669"/>
    <property type="project" value="UniProtKB-UniRule"/>
</dbReference>
<dbReference type="GO" id="GO:0043093">
    <property type="term" value="P:FtsZ-dependent cytokinesis"/>
    <property type="evidence" value="ECO:0007669"/>
    <property type="project" value="UniProtKB-UniRule"/>
</dbReference>
<dbReference type="CDD" id="cd24048">
    <property type="entry name" value="ASKHA_NBD_FtsA"/>
    <property type="match status" value="1"/>
</dbReference>
<dbReference type="FunFam" id="3.30.1490.110:FF:000003">
    <property type="entry name" value="Cell division protein FtsA"/>
    <property type="match status" value="1"/>
</dbReference>
<dbReference type="FunFam" id="3.30.420.40:FF:000239">
    <property type="entry name" value="Cell division protein FtsA"/>
    <property type="match status" value="1"/>
</dbReference>
<dbReference type="Gene3D" id="3.30.1490.110">
    <property type="match status" value="1"/>
</dbReference>
<dbReference type="Gene3D" id="3.30.420.40">
    <property type="match status" value="2"/>
</dbReference>
<dbReference type="HAMAP" id="MF_02033">
    <property type="entry name" value="FtsA"/>
    <property type="match status" value="1"/>
</dbReference>
<dbReference type="InterPro" id="IPR043129">
    <property type="entry name" value="ATPase_NBD"/>
</dbReference>
<dbReference type="InterPro" id="IPR020823">
    <property type="entry name" value="Cell_div_FtsA"/>
</dbReference>
<dbReference type="InterPro" id="IPR050696">
    <property type="entry name" value="FtsA/MreB"/>
</dbReference>
<dbReference type="InterPro" id="IPR021873">
    <property type="entry name" value="FtsA_C"/>
</dbReference>
<dbReference type="InterPro" id="IPR003494">
    <property type="entry name" value="SHS2_FtsA"/>
</dbReference>
<dbReference type="NCBIfam" id="TIGR01174">
    <property type="entry name" value="ftsA"/>
    <property type="match status" value="1"/>
</dbReference>
<dbReference type="PANTHER" id="PTHR32432:SF4">
    <property type="entry name" value="CELL DIVISION PROTEIN FTSA"/>
    <property type="match status" value="1"/>
</dbReference>
<dbReference type="PANTHER" id="PTHR32432">
    <property type="entry name" value="CELL DIVISION PROTEIN FTSA-RELATED"/>
    <property type="match status" value="1"/>
</dbReference>
<dbReference type="Pfam" id="PF14450">
    <property type="entry name" value="FtsA"/>
    <property type="match status" value="1"/>
</dbReference>
<dbReference type="Pfam" id="PF11983">
    <property type="entry name" value="FtsA_C"/>
    <property type="match status" value="1"/>
</dbReference>
<dbReference type="Pfam" id="PF02491">
    <property type="entry name" value="SHS2_FTSA"/>
    <property type="match status" value="1"/>
</dbReference>
<dbReference type="PIRSF" id="PIRSF003101">
    <property type="entry name" value="FtsA"/>
    <property type="match status" value="1"/>
</dbReference>
<dbReference type="SMART" id="SM00842">
    <property type="entry name" value="FtsA"/>
    <property type="match status" value="1"/>
</dbReference>
<dbReference type="SUPFAM" id="SSF53067">
    <property type="entry name" value="Actin-like ATPase domain"/>
    <property type="match status" value="2"/>
</dbReference>
<keyword id="KW-0131">Cell cycle</keyword>
<keyword id="KW-0132">Cell division</keyword>
<keyword id="KW-1003">Cell membrane</keyword>
<keyword id="KW-0472">Membrane</keyword>
<keyword id="KW-1185">Reference proteome</keyword>
<proteinExistence type="evidence at protein level"/>
<sequence>MAREGFFTGLDIGTSSVKVLVAEQRNGELNVIGVSNAKSKGVKDGIIVDIDAAATAIKSAISQAEEKAGISIKSVNVGLPGNLLQVEPTQGMIPVTSDTKEITDQDVENVVKSALTKSMTPDREVITFIPEEFIVDGFQGIRDPRGMMGVRLEMRGLLYTGPRTILHNLRKTVERAGVQVENVIISPLAMVQSVLNEGEREFGATVIDMGAGQTTVATIRNQELQFTHILQEGGDYVTKDISKVLKTSRKLAEGLKLNYGEAYPPLASKETFQVEVIGEVEAVEVTEAYLSEIISARIKHILEQIKQELDRRRLLDLPGGIVLIGGNAILPGMVELAQEVFGVRVKLYVPNQVGIRNPAFAHVISLSEFAGQLTEVNLLAQGAIKGENDLSHQPISFGGMLQKTAQFVQSTPVQPAPAPEVEPVAPTEPMADFQQASQNKPKLADRFRGLIGSMFDE</sequence>
<protein>
    <recommendedName>
        <fullName evidence="1">Cell division protein FtsA</fullName>
    </recommendedName>
</protein>
<reference key="1">
    <citation type="journal article" date="2007" name="J. Bacteriol.">
        <title>Genome sequence of Avery's virulent serotype 2 strain D39 of Streptococcus pneumoniae and comparison with that of unencapsulated laboratory strain R6.</title>
        <authorList>
            <person name="Lanie J.A."/>
            <person name="Ng W.-L."/>
            <person name="Kazmierczak K.M."/>
            <person name="Andrzejewski T.M."/>
            <person name="Davidsen T.M."/>
            <person name="Wayne K.J."/>
            <person name="Tettelin H."/>
            <person name="Glass J.I."/>
            <person name="Winkler M.E."/>
        </authorList>
    </citation>
    <scope>NUCLEOTIDE SEQUENCE [LARGE SCALE GENOMIC DNA]</scope>
    <source>
        <strain>D39 / NCTC 7466</strain>
    </source>
</reference>
<reference key="2">
    <citation type="journal article" date="2017" name="Mol. Microbiol.">
        <title>Absence of the KhpA and KhpB (JAG/EloR) RNA-binding proteins suppresses the requirement for PBP2b by overproduction of FtsA in Streptococcus pneumoniae D39.</title>
        <authorList>
            <person name="Zheng J.J."/>
            <person name="Perez A.J."/>
            <person name="Tsui H.T."/>
            <person name="Massidda O."/>
            <person name="Winkler M.E."/>
        </authorList>
    </citation>
    <scope>FUNCTION</scope>
    <scope>INDUCTION</scope>
    <source>
        <strain>D39 / NCTC 7466</strain>
    </source>
</reference>
<feature type="chain" id="PRO_0000454546" description="Cell division protein FtsA">
    <location>
        <begin position="1"/>
        <end position="457"/>
    </location>
</feature>
<evidence type="ECO:0000255" key="1">
    <source>
        <dbReference type="HAMAP-Rule" id="MF_02033"/>
    </source>
</evidence>
<evidence type="ECO:0000269" key="2">
    <source>
    </source>
</evidence>
<name>FTSA_STRP2</name>
<organism>
    <name type="scientific">Streptococcus pneumoniae serotype 2 (strain D39 / NCTC 7466)</name>
    <dbReference type="NCBI Taxonomy" id="373153"/>
    <lineage>
        <taxon>Bacteria</taxon>
        <taxon>Bacillati</taxon>
        <taxon>Bacillota</taxon>
        <taxon>Bacilli</taxon>
        <taxon>Lactobacillales</taxon>
        <taxon>Streptococcaceae</taxon>
        <taxon>Streptococcus</taxon>
    </lineage>
</organism>